<gene>
    <name evidence="1" type="primary">hutU</name>
    <name type="ordered locus">CC_0957</name>
</gene>
<keyword id="KW-0963">Cytoplasm</keyword>
<keyword id="KW-0369">Histidine metabolism</keyword>
<keyword id="KW-0456">Lyase</keyword>
<keyword id="KW-0520">NAD</keyword>
<keyword id="KW-1185">Reference proteome</keyword>
<feature type="chain" id="PRO_0000207338" description="Urocanate hydratase">
    <location>
        <begin position="1"/>
        <end position="554"/>
    </location>
</feature>
<feature type="active site" evidence="1">
    <location>
        <position position="409"/>
    </location>
</feature>
<feature type="binding site" evidence="1">
    <location>
        <begin position="51"/>
        <end position="52"/>
    </location>
    <ligand>
        <name>NAD(+)</name>
        <dbReference type="ChEBI" id="CHEBI:57540"/>
    </ligand>
</feature>
<feature type="binding site" evidence="1">
    <location>
        <position position="129"/>
    </location>
    <ligand>
        <name>NAD(+)</name>
        <dbReference type="ChEBI" id="CHEBI:57540"/>
    </ligand>
</feature>
<feature type="binding site" evidence="1">
    <location>
        <begin position="175"/>
        <end position="177"/>
    </location>
    <ligand>
        <name>NAD(+)</name>
        <dbReference type="ChEBI" id="CHEBI:57540"/>
    </ligand>
</feature>
<feature type="binding site" evidence="1">
    <location>
        <position position="195"/>
    </location>
    <ligand>
        <name>NAD(+)</name>
        <dbReference type="ChEBI" id="CHEBI:57540"/>
    </ligand>
</feature>
<feature type="binding site" evidence="1">
    <location>
        <begin position="241"/>
        <end position="242"/>
    </location>
    <ligand>
        <name>NAD(+)</name>
        <dbReference type="ChEBI" id="CHEBI:57540"/>
    </ligand>
</feature>
<feature type="binding site" evidence="1">
    <location>
        <begin position="262"/>
        <end position="266"/>
    </location>
    <ligand>
        <name>NAD(+)</name>
        <dbReference type="ChEBI" id="CHEBI:57540"/>
    </ligand>
</feature>
<feature type="binding site" evidence="1">
    <location>
        <begin position="272"/>
        <end position="273"/>
    </location>
    <ligand>
        <name>NAD(+)</name>
        <dbReference type="ChEBI" id="CHEBI:57540"/>
    </ligand>
</feature>
<feature type="binding site" evidence="1">
    <location>
        <position position="321"/>
    </location>
    <ligand>
        <name>NAD(+)</name>
        <dbReference type="ChEBI" id="CHEBI:57540"/>
    </ligand>
</feature>
<feature type="binding site" evidence="1">
    <location>
        <position position="491"/>
    </location>
    <ligand>
        <name>NAD(+)</name>
        <dbReference type="ChEBI" id="CHEBI:57540"/>
    </ligand>
</feature>
<dbReference type="EC" id="4.2.1.49" evidence="1"/>
<dbReference type="EMBL" id="AE005673">
    <property type="protein sequence ID" value="AAK22941.1"/>
    <property type="molecule type" value="Genomic_DNA"/>
</dbReference>
<dbReference type="PIR" id="A87368">
    <property type="entry name" value="A87368"/>
</dbReference>
<dbReference type="RefSeq" id="NP_419773.1">
    <property type="nucleotide sequence ID" value="NC_002696.2"/>
</dbReference>
<dbReference type="RefSeq" id="WP_010918841.1">
    <property type="nucleotide sequence ID" value="NC_002696.2"/>
</dbReference>
<dbReference type="SMR" id="Q9A9M1"/>
<dbReference type="STRING" id="190650.CC_0957"/>
<dbReference type="EnsemblBacteria" id="AAK22941">
    <property type="protein sequence ID" value="AAK22941"/>
    <property type="gene ID" value="CC_0957"/>
</dbReference>
<dbReference type="KEGG" id="ccr:CC_0957"/>
<dbReference type="PATRIC" id="fig|190650.5.peg.972"/>
<dbReference type="eggNOG" id="COG2987">
    <property type="taxonomic scope" value="Bacteria"/>
</dbReference>
<dbReference type="HOGENOM" id="CLU_018868_0_1_5"/>
<dbReference type="BioCyc" id="CAULO:CC0957-MONOMER"/>
<dbReference type="UniPathway" id="UPA00379">
    <property type="reaction ID" value="UER00550"/>
</dbReference>
<dbReference type="Proteomes" id="UP000001816">
    <property type="component" value="Chromosome"/>
</dbReference>
<dbReference type="GO" id="GO:0005737">
    <property type="term" value="C:cytoplasm"/>
    <property type="evidence" value="ECO:0007669"/>
    <property type="project" value="UniProtKB-SubCell"/>
</dbReference>
<dbReference type="GO" id="GO:0016153">
    <property type="term" value="F:urocanate hydratase activity"/>
    <property type="evidence" value="ECO:0007669"/>
    <property type="project" value="UniProtKB-UniRule"/>
</dbReference>
<dbReference type="GO" id="GO:0019556">
    <property type="term" value="P:L-histidine catabolic process to glutamate and formamide"/>
    <property type="evidence" value="ECO:0007669"/>
    <property type="project" value="UniProtKB-UniPathway"/>
</dbReference>
<dbReference type="GO" id="GO:0019557">
    <property type="term" value="P:L-histidine catabolic process to glutamate and formate"/>
    <property type="evidence" value="ECO:0007669"/>
    <property type="project" value="UniProtKB-UniPathway"/>
</dbReference>
<dbReference type="FunFam" id="3.40.50.10730:FF:000001">
    <property type="entry name" value="Urocanate hydratase"/>
    <property type="match status" value="1"/>
</dbReference>
<dbReference type="Gene3D" id="3.40.50.10730">
    <property type="entry name" value="Urocanase like domains"/>
    <property type="match status" value="1"/>
</dbReference>
<dbReference type="Gene3D" id="3.40.1770.10">
    <property type="entry name" value="Urocanase superfamily"/>
    <property type="match status" value="1"/>
</dbReference>
<dbReference type="HAMAP" id="MF_00577">
    <property type="entry name" value="HutU"/>
    <property type="match status" value="1"/>
</dbReference>
<dbReference type="InterPro" id="IPR055351">
    <property type="entry name" value="Urocanase"/>
</dbReference>
<dbReference type="InterPro" id="IPR023637">
    <property type="entry name" value="Urocanase-like"/>
</dbReference>
<dbReference type="InterPro" id="IPR035401">
    <property type="entry name" value="Urocanase_C"/>
</dbReference>
<dbReference type="InterPro" id="IPR038364">
    <property type="entry name" value="Urocanase_central_sf"/>
</dbReference>
<dbReference type="InterPro" id="IPR023636">
    <property type="entry name" value="Urocanase_CS"/>
</dbReference>
<dbReference type="InterPro" id="IPR035400">
    <property type="entry name" value="Urocanase_N"/>
</dbReference>
<dbReference type="InterPro" id="IPR035085">
    <property type="entry name" value="Urocanase_Rossmann-like"/>
</dbReference>
<dbReference type="InterPro" id="IPR036190">
    <property type="entry name" value="Urocanase_sf"/>
</dbReference>
<dbReference type="NCBIfam" id="TIGR01228">
    <property type="entry name" value="hutU"/>
    <property type="match status" value="1"/>
</dbReference>
<dbReference type="NCBIfam" id="NF003820">
    <property type="entry name" value="PRK05414.1"/>
    <property type="match status" value="1"/>
</dbReference>
<dbReference type="PANTHER" id="PTHR12216">
    <property type="entry name" value="UROCANATE HYDRATASE"/>
    <property type="match status" value="1"/>
</dbReference>
<dbReference type="PANTHER" id="PTHR12216:SF4">
    <property type="entry name" value="UROCANATE HYDRATASE"/>
    <property type="match status" value="1"/>
</dbReference>
<dbReference type="Pfam" id="PF01175">
    <property type="entry name" value="Urocanase"/>
    <property type="match status" value="1"/>
</dbReference>
<dbReference type="Pfam" id="PF17392">
    <property type="entry name" value="Urocanase_C"/>
    <property type="match status" value="1"/>
</dbReference>
<dbReference type="Pfam" id="PF17391">
    <property type="entry name" value="Urocanase_N"/>
    <property type="match status" value="1"/>
</dbReference>
<dbReference type="PIRSF" id="PIRSF001423">
    <property type="entry name" value="Urocanate_hydrat"/>
    <property type="match status" value="1"/>
</dbReference>
<dbReference type="SUPFAM" id="SSF111326">
    <property type="entry name" value="Urocanase"/>
    <property type="match status" value="1"/>
</dbReference>
<dbReference type="PROSITE" id="PS01233">
    <property type="entry name" value="UROCANASE"/>
    <property type="match status" value="1"/>
</dbReference>
<sequence length="554" mass="60244">MTRRDTTRVIRPATGPERTCKSWLTEAALRMLMNNLHPDVAERPEELVVYGGIGRAARDWESYDKIVETLRRLEDDETLLVQSGKPVGVFRTHADAPRVLIANSNLVPRWASWEHFNELDRKGLAMYGQMTAGSWIYIGAQGIVQGTYETFVEMGRQHYGGDLSGRWLLTAGLGGMGGAQPLAAVMAGAACLAIECQPSSIEMRLRTGYLDRSTDKVEEALAWIEESCAAKTPISVGLLGNAAELLPELFKRGVRPDLLTDQTSAHDPVNGYLPAGWSLERWHAMRDQDPPQVAEAAKASMAAHVKAMLDFQAAGVPTVDYGNNIRQMALEEGVTNAFDFPGFVPAYIRPLFCRGVGPFRWAALSGDPEDIAKTDAKVKELIPDNPHLHNWLDMAGQKIRFQGLPARICWVGLGDRHRLGLAFNEMVAKGELKAPIVIGRDHLDSGSVASPNRETEAMRDGSDAVSDWPLLNALLNTASGATWVSLHHGGGVGMGFSQHAGMVIVCDGTEAAAKRVARVLWNDPATGVMRHADAGYDIALACAREKGLDLPGIL</sequence>
<organism>
    <name type="scientific">Caulobacter vibrioides (strain ATCC 19089 / CIP 103742 / CB 15)</name>
    <name type="common">Caulobacter crescentus</name>
    <dbReference type="NCBI Taxonomy" id="190650"/>
    <lineage>
        <taxon>Bacteria</taxon>
        <taxon>Pseudomonadati</taxon>
        <taxon>Pseudomonadota</taxon>
        <taxon>Alphaproteobacteria</taxon>
        <taxon>Caulobacterales</taxon>
        <taxon>Caulobacteraceae</taxon>
        <taxon>Caulobacter</taxon>
    </lineage>
</organism>
<proteinExistence type="inferred from homology"/>
<accession>Q9A9M1</accession>
<evidence type="ECO:0000255" key="1">
    <source>
        <dbReference type="HAMAP-Rule" id="MF_00577"/>
    </source>
</evidence>
<comment type="function">
    <text evidence="1">Catalyzes the conversion of urocanate to 4-imidazolone-5-propionate.</text>
</comment>
<comment type="catalytic activity">
    <reaction evidence="1">
        <text>4-imidazolone-5-propanoate = trans-urocanate + H2O</text>
        <dbReference type="Rhea" id="RHEA:13101"/>
        <dbReference type="ChEBI" id="CHEBI:15377"/>
        <dbReference type="ChEBI" id="CHEBI:17771"/>
        <dbReference type="ChEBI" id="CHEBI:77893"/>
        <dbReference type="EC" id="4.2.1.49"/>
    </reaction>
</comment>
<comment type="cofactor">
    <cofactor evidence="1">
        <name>NAD(+)</name>
        <dbReference type="ChEBI" id="CHEBI:57540"/>
    </cofactor>
    <text evidence="1">Binds 1 NAD(+) per subunit.</text>
</comment>
<comment type="pathway">
    <text evidence="1">Amino-acid degradation; L-histidine degradation into L-glutamate; N-formimidoyl-L-glutamate from L-histidine: step 2/3.</text>
</comment>
<comment type="subcellular location">
    <subcellularLocation>
        <location evidence="1">Cytoplasm</location>
    </subcellularLocation>
</comment>
<comment type="similarity">
    <text evidence="1">Belongs to the urocanase family.</text>
</comment>
<protein>
    <recommendedName>
        <fullName evidence="1">Urocanate hydratase</fullName>
        <shortName evidence="1">Urocanase</shortName>
        <ecNumber evidence="1">4.2.1.49</ecNumber>
    </recommendedName>
    <alternativeName>
        <fullName evidence="1">Imidazolonepropionate hydrolase</fullName>
    </alternativeName>
</protein>
<reference key="1">
    <citation type="journal article" date="2001" name="Proc. Natl. Acad. Sci. U.S.A.">
        <title>Complete genome sequence of Caulobacter crescentus.</title>
        <authorList>
            <person name="Nierman W.C."/>
            <person name="Feldblyum T.V."/>
            <person name="Laub M.T."/>
            <person name="Paulsen I.T."/>
            <person name="Nelson K.E."/>
            <person name="Eisen J.A."/>
            <person name="Heidelberg J.F."/>
            <person name="Alley M.R.K."/>
            <person name="Ohta N."/>
            <person name="Maddock J.R."/>
            <person name="Potocka I."/>
            <person name="Nelson W.C."/>
            <person name="Newton A."/>
            <person name="Stephens C."/>
            <person name="Phadke N.D."/>
            <person name="Ely B."/>
            <person name="DeBoy R.T."/>
            <person name="Dodson R.J."/>
            <person name="Durkin A.S."/>
            <person name="Gwinn M.L."/>
            <person name="Haft D.H."/>
            <person name="Kolonay J.F."/>
            <person name="Smit J."/>
            <person name="Craven M.B."/>
            <person name="Khouri H.M."/>
            <person name="Shetty J."/>
            <person name="Berry K.J."/>
            <person name="Utterback T.R."/>
            <person name="Tran K."/>
            <person name="Wolf A.M."/>
            <person name="Vamathevan J.J."/>
            <person name="Ermolaeva M.D."/>
            <person name="White O."/>
            <person name="Salzberg S.L."/>
            <person name="Venter J.C."/>
            <person name="Shapiro L."/>
            <person name="Fraser C.M."/>
        </authorList>
    </citation>
    <scope>NUCLEOTIDE SEQUENCE [LARGE SCALE GENOMIC DNA]</scope>
    <source>
        <strain>ATCC 19089 / CIP 103742 / CB 15</strain>
    </source>
</reference>
<name>HUTU_CAUVC</name>